<gene>
    <name type="ordered locus">BCE_3979</name>
</gene>
<organism>
    <name type="scientific">Bacillus cereus (strain ATCC 10987 / NRS 248)</name>
    <dbReference type="NCBI Taxonomy" id="222523"/>
    <lineage>
        <taxon>Bacteria</taxon>
        <taxon>Bacillati</taxon>
        <taxon>Bacillota</taxon>
        <taxon>Bacilli</taxon>
        <taxon>Bacillales</taxon>
        <taxon>Bacillaceae</taxon>
        <taxon>Bacillus</taxon>
        <taxon>Bacillus cereus group</taxon>
    </lineage>
</organism>
<keyword id="KW-0963">Cytoplasm</keyword>
<accession>Q732D5</accession>
<reference key="1">
    <citation type="journal article" date="2004" name="Nucleic Acids Res.">
        <title>The genome sequence of Bacillus cereus ATCC 10987 reveals metabolic adaptations and a large plasmid related to Bacillus anthracis pXO1.</title>
        <authorList>
            <person name="Rasko D.A."/>
            <person name="Ravel J."/>
            <person name="Oekstad O.A."/>
            <person name="Helgason E."/>
            <person name="Cer R.Z."/>
            <person name="Jiang L."/>
            <person name="Shores K.A."/>
            <person name="Fouts D.E."/>
            <person name="Tourasse N.J."/>
            <person name="Angiuoli S.V."/>
            <person name="Kolonay J.F."/>
            <person name="Nelson W.C."/>
            <person name="Kolstoe A.-B."/>
            <person name="Fraser C.M."/>
            <person name="Read T.D."/>
        </authorList>
    </citation>
    <scope>NUCLEOTIDE SEQUENCE [LARGE SCALE GENOMIC DNA]</scope>
    <source>
        <strain>ATCC 10987 / NRS 248</strain>
    </source>
</reference>
<evidence type="ECO:0000255" key="1">
    <source>
        <dbReference type="HAMAP-Rule" id="MF_01126"/>
    </source>
</evidence>
<evidence type="ECO:0000305" key="2"/>
<sequence>MFGQRQSMIVYLHSLKHAKILRKYGNIHYISKRLKYAVVYCDMEQIEHMMQKLNKLPFVKKIEQSYRPYLKTEFENSRPDRAKEYDYS</sequence>
<feature type="chain" id="PRO_0000074650" description="UPF0298 protein BCE_3979">
    <location>
        <begin position="1"/>
        <end position="88"/>
    </location>
</feature>
<dbReference type="EMBL" id="AE017194">
    <property type="protein sequence ID" value="AAS42882.1"/>
    <property type="status" value="ALT_INIT"/>
    <property type="molecule type" value="Genomic_DNA"/>
</dbReference>
<dbReference type="SMR" id="Q732D5"/>
<dbReference type="KEGG" id="bca:BCE_3979"/>
<dbReference type="HOGENOM" id="CLU_159890_2_0_9"/>
<dbReference type="Proteomes" id="UP000002527">
    <property type="component" value="Chromosome"/>
</dbReference>
<dbReference type="GO" id="GO:0005737">
    <property type="term" value="C:cytoplasm"/>
    <property type="evidence" value="ECO:0007669"/>
    <property type="project" value="UniProtKB-SubCell"/>
</dbReference>
<dbReference type="HAMAP" id="MF_01126">
    <property type="entry name" value="UPF0298"/>
    <property type="match status" value="1"/>
</dbReference>
<dbReference type="InterPro" id="IPR016979">
    <property type="entry name" value="DUF2129"/>
</dbReference>
<dbReference type="NCBIfam" id="NF002777">
    <property type="entry name" value="PRK02886.1"/>
    <property type="match status" value="1"/>
</dbReference>
<dbReference type="Pfam" id="PF09902">
    <property type="entry name" value="DUF2129"/>
    <property type="match status" value="1"/>
</dbReference>
<dbReference type="PIRSF" id="PIRSF031653">
    <property type="entry name" value="UCP031653"/>
    <property type="match status" value="1"/>
</dbReference>
<protein>
    <recommendedName>
        <fullName evidence="1">UPF0298 protein BCE_3979</fullName>
    </recommendedName>
</protein>
<name>Y3979_BACC1</name>
<proteinExistence type="inferred from homology"/>
<comment type="subcellular location">
    <subcellularLocation>
        <location evidence="1">Cytoplasm</location>
    </subcellularLocation>
</comment>
<comment type="similarity">
    <text evidence="1">Belongs to the UPF0298 family.</text>
</comment>
<comment type="sequence caution" evidence="2">
    <conflict type="erroneous initiation">
        <sequence resource="EMBL-CDS" id="AAS42882"/>
    </conflict>
</comment>